<reference key="1">
    <citation type="submission" date="2008-06" db="EMBL/GenBank/DDBJ databases">
        <title>Complete sequence of chromosome of Prosthecochloris aestuarii DSM 271.</title>
        <authorList>
            <consortium name="US DOE Joint Genome Institute"/>
            <person name="Lucas S."/>
            <person name="Copeland A."/>
            <person name="Lapidus A."/>
            <person name="Glavina del Rio T."/>
            <person name="Dalin E."/>
            <person name="Tice H."/>
            <person name="Bruce D."/>
            <person name="Goodwin L."/>
            <person name="Pitluck S."/>
            <person name="Schmutz J."/>
            <person name="Larimer F."/>
            <person name="Land M."/>
            <person name="Hauser L."/>
            <person name="Kyrpides N."/>
            <person name="Anderson I."/>
            <person name="Liu Z."/>
            <person name="Li T."/>
            <person name="Zhao F."/>
            <person name="Overmann J."/>
            <person name="Bryant D.A."/>
            <person name="Richardson P."/>
        </authorList>
    </citation>
    <scope>NUCLEOTIDE SEQUENCE [LARGE SCALE GENOMIC DNA]</scope>
    <source>
        <strain>DSM 271 / SK 413</strain>
    </source>
</reference>
<evidence type="ECO:0000255" key="1">
    <source>
        <dbReference type="HAMAP-Rule" id="MF_00418"/>
    </source>
</evidence>
<evidence type="ECO:0000305" key="2"/>
<dbReference type="EC" id="4.3.3.7" evidence="1"/>
<dbReference type="EMBL" id="CP001108">
    <property type="protein sequence ID" value="ACF45592.1"/>
    <property type="molecule type" value="Genomic_DNA"/>
</dbReference>
<dbReference type="RefSeq" id="WP_012505129.1">
    <property type="nucleotide sequence ID" value="NC_011059.1"/>
</dbReference>
<dbReference type="SMR" id="B4S5J5"/>
<dbReference type="STRING" id="290512.Paes_0536"/>
<dbReference type="KEGG" id="paa:Paes_0536"/>
<dbReference type="eggNOG" id="COG0329">
    <property type="taxonomic scope" value="Bacteria"/>
</dbReference>
<dbReference type="HOGENOM" id="CLU_049343_7_0_10"/>
<dbReference type="UniPathway" id="UPA00034">
    <property type="reaction ID" value="UER00017"/>
</dbReference>
<dbReference type="Proteomes" id="UP000002725">
    <property type="component" value="Chromosome"/>
</dbReference>
<dbReference type="GO" id="GO:0005829">
    <property type="term" value="C:cytosol"/>
    <property type="evidence" value="ECO:0007669"/>
    <property type="project" value="TreeGrafter"/>
</dbReference>
<dbReference type="GO" id="GO:0008840">
    <property type="term" value="F:4-hydroxy-tetrahydrodipicolinate synthase activity"/>
    <property type="evidence" value="ECO:0007669"/>
    <property type="project" value="UniProtKB-UniRule"/>
</dbReference>
<dbReference type="GO" id="GO:0019877">
    <property type="term" value="P:diaminopimelate biosynthetic process"/>
    <property type="evidence" value="ECO:0007669"/>
    <property type="project" value="UniProtKB-UniRule"/>
</dbReference>
<dbReference type="GO" id="GO:0009089">
    <property type="term" value="P:lysine biosynthetic process via diaminopimelate"/>
    <property type="evidence" value="ECO:0007669"/>
    <property type="project" value="UniProtKB-UniRule"/>
</dbReference>
<dbReference type="CDD" id="cd00950">
    <property type="entry name" value="DHDPS"/>
    <property type="match status" value="1"/>
</dbReference>
<dbReference type="Gene3D" id="3.20.20.70">
    <property type="entry name" value="Aldolase class I"/>
    <property type="match status" value="1"/>
</dbReference>
<dbReference type="HAMAP" id="MF_00418">
    <property type="entry name" value="DapA"/>
    <property type="match status" value="1"/>
</dbReference>
<dbReference type="InterPro" id="IPR013785">
    <property type="entry name" value="Aldolase_TIM"/>
</dbReference>
<dbReference type="InterPro" id="IPR005263">
    <property type="entry name" value="DapA"/>
</dbReference>
<dbReference type="InterPro" id="IPR002220">
    <property type="entry name" value="DapA-like"/>
</dbReference>
<dbReference type="InterPro" id="IPR020625">
    <property type="entry name" value="Schiff_base-form_aldolases_AS"/>
</dbReference>
<dbReference type="NCBIfam" id="TIGR00674">
    <property type="entry name" value="dapA"/>
    <property type="match status" value="1"/>
</dbReference>
<dbReference type="PANTHER" id="PTHR12128:SF66">
    <property type="entry name" value="4-HYDROXY-2-OXOGLUTARATE ALDOLASE, MITOCHONDRIAL"/>
    <property type="match status" value="1"/>
</dbReference>
<dbReference type="PANTHER" id="PTHR12128">
    <property type="entry name" value="DIHYDRODIPICOLINATE SYNTHASE"/>
    <property type="match status" value="1"/>
</dbReference>
<dbReference type="Pfam" id="PF00701">
    <property type="entry name" value="DHDPS"/>
    <property type="match status" value="1"/>
</dbReference>
<dbReference type="PIRSF" id="PIRSF001365">
    <property type="entry name" value="DHDPS"/>
    <property type="match status" value="1"/>
</dbReference>
<dbReference type="PRINTS" id="PR00146">
    <property type="entry name" value="DHPICSNTHASE"/>
</dbReference>
<dbReference type="SMART" id="SM01130">
    <property type="entry name" value="DHDPS"/>
    <property type="match status" value="1"/>
</dbReference>
<dbReference type="SUPFAM" id="SSF51569">
    <property type="entry name" value="Aldolase"/>
    <property type="match status" value="1"/>
</dbReference>
<dbReference type="PROSITE" id="PS00666">
    <property type="entry name" value="DHDPS_2"/>
    <property type="match status" value="1"/>
</dbReference>
<proteinExistence type="inferred from homology"/>
<comment type="function">
    <text evidence="1">Catalyzes the condensation of (S)-aspartate-beta-semialdehyde [(S)-ASA] and pyruvate to 4-hydroxy-tetrahydrodipicolinate (HTPA).</text>
</comment>
<comment type="catalytic activity">
    <reaction evidence="1">
        <text>L-aspartate 4-semialdehyde + pyruvate = (2S,4S)-4-hydroxy-2,3,4,5-tetrahydrodipicolinate + H2O + H(+)</text>
        <dbReference type="Rhea" id="RHEA:34171"/>
        <dbReference type="ChEBI" id="CHEBI:15361"/>
        <dbReference type="ChEBI" id="CHEBI:15377"/>
        <dbReference type="ChEBI" id="CHEBI:15378"/>
        <dbReference type="ChEBI" id="CHEBI:67139"/>
        <dbReference type="ChEBI" id="CHEBI:537519"/>
        <dbReference type="EC" id="4.3.3.7"/>
    </reaction>
</comment>
<comment type="pathway">
    <text evidence="1">Amino-acid biosynthesis; L-lysine biosynthesis via DAP pathway; (S)-tetrahydrodipicolinate from L-aspartate: step 3/4.</text>
</comment>
<comment type="subunit">
    <text evidence="1">Homotetramer; dimer of dimers.</text>
</comment>
<comment type="subcellular location">
    <subcellularLocation>
        <location evidence="1">Cytoplasm</location>
    </subcellularLocation>
</comment>
<comment type="similarity">
    <text evidence="1">Belongs to the DapA family.</text>
</comment>
<comment type="caution">
    <text evidence="2">Was originally thought to be a dihydrodipicolinate synthase (DHDPS), catalyzing the condensation of (S)-aspartate-beta-semialdehyde [(S)-ASA] and pyruvate to dihydrodipicolinate (DHDP). However, it was shown in E.coli that the product of the enzymatic reaction is not dihydrodipicolinate but in fact (4S)-4-hydroxy-2,3,4,5-tetrahydro-(2S)-dipicolinic acid (HTPA), and that the consecutive dehydration reaction leading to DHDP is not spontaneous but catalyzed by DapB.</text>
</comment>
<protein>
    <recommendedName>
        <fullName evidence="1">4-hydroxy-tetrahydrodipicolinate synthase</fullName>
        <shortName evidence="1">HTPA synthase</shortName>
        <ecNumber evidence="1">4.3.3.7</ecNumber>
    </recommendedName>
</protein>
<gene>
    <name evidence="1" type="primary">dapA</name>
    <name type="ordered locus">Paes_0536</name>
</gene>
<accession>B4S5J5</accession>
<keyword id="KW-0028">Amino-acid biosynthesis</keyword>
<keyword id="KW-0963">Cytoplasm</keyword>
<keyword id="KW-0220">Diaminopimelate biosynthesis</keyword>
<keyword id="KW-0456">Lyase</keyword>
<keyword id="KW-0457">Lysine biosynthesis</keyword>
<keyword id="KW-0704">Schiff base</keyword>
<name>DAPA_PROA2</name>
<feature type="chain" id="PRO_1000124058" description="4-hydroxy-tetrahydrodipicolinate synthase">
    <location>
        <begin position="1"/>
        <end position="297"/>
    </location>
</feature>
<feature type="active site" description="Proton donor/acceptor" evidence="1">
    <location>
        <position position="137"/>
    </location>
</feature>
<feature type="active site" description="Schiff-base intermediate with substrate" evidence="1">
    <location>
        <position position="166"/>
    </location>
</feature>
<feature type="binding site" evidence="1">
    <location>
        <position position="49"/>
    </location>
    <ligand>
        <name>pyruvate</name>
        <dbReference type="ChEBI" id="CHEBI:15361"/>
    </ligand>
</feature>
<feature type="binding site" evidence="1">
    <location>
        <position position="208"/>
    </location>
    <ligand>
        <name>pyruvate</name>
        <dbReference type="ChEBI" id="CHEBI:15361"/>
    </ligand>
</feature>
<feature type="site" description="Part of a proton relay during catalysis" evidence="1">
    <location>
        <position position="48"/>
    </location>
</feature>
<feature type="site" description="Part of a proton relay during catalysis" evidence="1">
    <location>
        <position position="111"/>
    </location>
</feature>
<sequence length="297" mass="32383">MSNTSISGSAVALVTPFRQDTSIDTDALRRLVQFHLASGTDILIPCGTTGESPTLCQEEQAAIIRIVKEEAGNHILVAAGAGTNDTRKAVELALNARKAGAEAILSVAPYYNKPSQEGFYQHYRHIAEALDIPVIIYNVPGRTGSNIAAETILRLASDFQNIAAVKEASDNIGQIMELLADRPDHFSVLTGEDTLILPFMAMGGDGVISVAANQVPAEIKQLITLVQEGNLPEARRLNNRLRKLFRLNFIESNPVPVKYALSLMGMIEEVYRLPLLAMEEKHKKILKQELETLGLIS</sequence>
<organism>
    <name type="scientific">Prosthecochloris aestuarii (strain DSM 271 / SK 413)</name>
    <dbReference type="NCBI Taxonomy" id="290512"/>
    <lineage>
        <taxon>Bacteria</taxon>
        <taxon>Pseudomonadati</taxon>
        <taxon>Chlorobiota</taxon>
        <taxon>Chlorobiia</taxon>
        <taxon>Chlorobiales</taxon>
        <taxon>Chlorobiaceae</taxon>
        <taxon>Prosthecochloris</taxon>
    </lineage>
</organism>